<evidence type="ECO:0000250" key="1"/>
<evidence type="ECO:0000255" key="2"/>
<evidence type="ECO:0000305" key="3"/>
<proteinExistence type="inferred from homology"/>
<keyword id="KW-0275">Fatty acid biosynthesis</keyword>
<keyword id="KW-0276">Fatty acid metabolism</keyword>
<keyword id="KW-0444">Lipid biosynthesis</keyword>
<keyword id="KW-0443">Lipid metabolism</keyword>
<keyword id="KW-0472">Membrane</keyword>
<keyword id="KW-1185">Reference proteome</keyword>
<keyword id="KW-0808">Transferase</keyword>
<keyword id="KW-0812">Transmembrane</keyword>
<keyword id="KW-1133">Transmembrane helix</keyword>
<reference key="1">
    <citation type="journal article" date="2002" name="Nature">
        <title>Sequence and analysis of chromosome 2 of Dictyostelium discoideum.</title>
        <authorList>
            <person name="Gloeckner G."/>
            <person name="Eichinger L."/>
            <person name="Szafranski K."/>
            <person name="Pachebat J.A."/>
            <person name="Bankier A.T."/>
            <person name="Dear P.H."/>
            <person name="Lehmann R."/>
            <person name="Baumgart C."/>
            <person name="Parra G."/>
            <person name="Abril J.F."/>
            <person name="Guigo R."/>
            <person name="Kumpf K."/>
            <person name="Tunggal B."/>
            <person name="Cox E.C."/>
            <person name="Quail M.A."/>
            <person name="Platzer M."/>
            <person name="Rosenthal A."/>
            <person name="Noegel A.A."/>
        </authorList>
    </citation>
    <scope>NUCLEOTIDE SEQUENCE [LARGE SCALE GENOMIC DNA]</scope>
    <source>
        <strain>AX4</strain>
    </source>
</reference>
<reference key="2">
    <citation type="journal article" date="2005" name="Nature">
        <title>The genome of the social amoeba Dictyostelium discoideum.</title>
        <authorList>
            <person name="Eichinger L."/>
            <person name="Pachebat J.A."/>
            <person name="Gloeckner G."/>
            <person name="Rajandream M.A."/>
            <person name="Sucgang R."/>
            <person name="Berriman M."/>
            <person name="Song J."/>
            <person name="Olsen R."/>
            <person name="Szafranski K."/>
            <person name="Xu Q."/>
            <person name="Tunggal B."/>
            <person name="Kummerfeld S."/>
            <person name="Madera M."/>
            <person name="Konfortov B.A."/>
            <person name="Rivero F."/>
            <person name="Bankier A.T."/>
            <person name="Lehmann R."/>
            <person name="Hamlin N."/>
            <person name="Davies R."/>
            <person name="Gaudet P."/>
            <person name="Fey P."/>
            <person name="Pilcher K."/>
            <person name="Chen G."/>
            <person name="Saunders D."/>
            <person name="Sodergren E.J."/>
            <person name="Davis P."/>
            <person name="Kerhornou A."/>
            <person name="Nie X."/>
            <person name="Hall N."/>
            <person name="Anjard C."/>
            <person name="Hemphill L."/>
            <person name="Bason N."/>
            <person name="Farbrother P."/>
            <person name="Desany B."/>
            <person name="Just E."/>
            <person name="Morio T."/>
            <person name="Rost R."/>
            <person name="Churcher C.M."/>
            <person name="Cooper J."/>
            <person name="Haydock S."/>
            <person name="van Driessche N."/>
            <person name="Cronin A."/>
            <person name="Goodhead I."/>
            <person name="Muzny D.M."/>
            <person name="Mourier T."/>
            <person name="Pain A."/>
            <person name="Lu M."/>
            <person name="Harper D."/>
            <person name="Lindsay R."/>
            <person name="Hauser H."/>
            <person name="James K.D."/>
            <person name="Quiles M."/>
            <person name="Madan Babu M."/>
            <person name="Saito T."/>
            <person name="Buchrieser C."/>
            <person name="Wardroper A."/>
            <person name="Felder M."/>
            <person name="Thangavelu M."/>
            <person name="Johnson D."/>
            <person name="Knights A."/>
            <person name="Loulseged H."/>
            <person name="Mungall K.L."/>
            <person name="Oliver K."/>
            <person name="Price C."/>
            <person name="Quail M.A."/>
            <person name="Urushihara H."/>
            <person name="Hernandez J."/>
            <person name="Rabbinowitsch E."/>
            <person name="Steffen D."/>
            <person name="Sanders M."/>
            <person name="Ma J."/>
            <person name="Kohara Y."/>
            <person name="Sharp S."/>
            <person name="Simmonds M.N."/>
            <person name="Spiegler S."/>
            <person name="Tivey A."/>
            <person name="Sugano S."/>
            <person name="White B."/>
            <person name="Walker D."/>
            <person name="Woodward J.R."/>
            <person name="Winckler T."/>
            <person name="Tanaka Y."/>
            <person name="Shaulsky G."/>
            <person name="Schleicher M."/>
            <person name="Weinstock G.M."/>
            <person name="Rosenthal A."/>
            <person name="Cox E.C."/>
            <person name="Chisholm R.L."/>
            <person name="Gibbs R.A."/>
            <person name="Loomis W.F."/>
            <person name="Platzer M."/>
            <person name="Kay R.R."/>
            <person name="Williams J.G."/>
            <person name="Dear P.H."/>
            <person name="Noegel A.A."/>
            <person name="Barrell B.G."/>
            <person name="Kuspa A."/>
        </authorList>
    </citation>
    <scope>NUCLEOTIDE SEQUENCE [LARGE SCALE GENOMIC DNA]</scope>
    <source>
        <strain>AX4</strain>
    </source>
</reference>
<protein>
    <recommendedName>
        <fullName evidence="3">Putative fatty acid elongase DDB_G0274669</fullName>
        <ecNumber>2.3.1.199</ecNumber>
    </recommendedName>
    <alternativeName>
        <fullName>3-keto acyl-CoA synthase DDB_G0274669</fullName>
    </alternativeName>
    <alternativeName>
        <fullName>Putative elongation of fatty acids protein DDB_G0274669</fullName>
    </alternativeName>
    <alternativeName>
        <fullName>Very-long-chain 3-oxoacyl-CoA synthase DDB_G0274669</fullName>
    </alternativeName>
</protein>
<dbReference type="EC" id="2.3.1.199"/>
<dbReference type="EMBL" id="AAFI02000012">
    <property type="protein sequence ID" value="EAL70227.1"/>
    <property type="molecule type" value="Genomic_DNA"/>
</dbReference>
<dbReference type="RefSeq" id="XP_644121.1">
    <property type="nucleotide sequence ID" value="XM_639029.1"/>
</dbReference>
<dbReference type="SMR" id="Q555E8"/>
<dbReference type="FunCoup" id="Q555E8">
    <property type="interactions" value="51"/>
</dbReference>
<dbReference type="PaxDb" id="44689-DDB0203216"/>
<dbReference type="EnsemblProtists" id="EAL70227">
    <property type="protein sequence ID" value="EAL70227"/>
    <property type="gene ID" value="DDB_G0274669"/>
</dbReference>
<dbReference type="GeneID" id="8619550"/>
<dbReference type="KEGG" id="ddi:DDB_G0274669"/>
<dbReference type="dictyBase" id="DDB_G0274669"/>
<dbReference type="VEuPathDB" id="AmoebaDB:DDB_G0274669"/>
<dbReference type="eggNOG" id="KOG3071">
    <property type="taxonomic scope" value="Eukaryota"/>
</dbReference>
<dbReference type="HOGENOM" id="CLU_048483_6_0_1"/>
<dbReference type="InParanoid" id="Q555E8"/>
<dbReference type="PhylomeDB" id="Q555E8"/>
<dbReference type="Reactome" id="R-DDI-2046105">
    <property type="pathway name" value="Linoleic acid (LA) metabolism"/>
</dbReference>
<dbReference type="Reactome" id="R-DDI-2046106">
    <property type="pathway name" value="alpha-linolenic acid (ALA) metabolism"/>
</dbReference>
<dbReference type="Reactome" id="R-DDI-75876">
    <property type="pathway name" value="Synthesis of very long-chain fatty acyl-CoAs"/>
</dbReference>
<dbReference type="PRO" id="PR:Q555E8"/>
<dbReference type="Proteomes" id="UP000002195">
    <property type="component" value="Chromosome 2"/>
</dbReference>
<dbReference type="GO" id="GO:0005789">
    <property type="term" value="C:endoplasmic reticulum membrane"/>
    <property type="evidence" value="ECO:0000250"/>
    <property type="project" value="UniProtKB"/>
</dbReference>
<dbReference type="GO" id="GO:0009922">
    <property type="term" value="F:fatty acid elongase activity"/>
    <property type="evidence" value="ECO:0000318"/>
    <property type="project" value="GO_Central"/>
</dbReference>
<dbReference type="GO" id="GO:0034625">
    <property type="term" value="P:fatty acid elongation, monounsaturated fatty acid"/>
    <property type="evidence" value="ECO:0000318"/>
    <property type="project" value="GO_Central"/>
</dbReference>
<dbReference type="GO" id="GO:0034626">
    <property type="term" value="P:fatty acid elongation, polyunsaturated fatty acid"/>
    <property type="evidence" value="ECO:0000318"/>
    <property type="project" value="GO_Central"/>
</dbReference>
<dbReference type="GO" id="GO:0019367">
    <property type="term" value="P:fatty acid elongation, saturated fatty acid"/>
    <property type="evidence" value="ECO:0000318"/>
    <property type="project" value="GO_Central"/>
</dbReference>
<dbReference type="GO" id="GO:0030148">
    <property type="term" value="P:sphingolipid biosynthetic process"/>
    <property type="evidence" value="ECO:0000318"/>
    <property type="project" value="GO_Central"/>
</dbReference>
<dbReference type="GO" id="GO:0042761">
    <property type="term" value="P:very long-chain fatty acid biosynthetic process"/>
    <property type="evidence" value="ECO:0000318"/>
    <property type="project" value="GO_Central"/>
</dbReference>
<dbReference type="InterPro" id="IPR030457">
    <property type="entry name" value="ELO_CS"/>
</dbReference>
<dbReference type="InterPro" id="IPR002076">
    <property type="entry name" value="ELO_fam"/>
</dbReference>
<dbReference type="PANTHER" id="PTHR11157:SF134">
    <property type="entry name" value="ELONGATION OF FATTY ACIDS PROTEIN 1-RELATED"/>
    <property type="match status" value="1"/>
</dbReference>
<dbReference type="PANTHER" id="PTHR11157">
    <property type="entry name" value="FATTY ACID ACYL TRANSFERASE-RELATED"/>
    <property type="match status" value="1"/>
</dbReference>
<dbReference type="Pfam" id="PF01151">
    <property type="entry name" value="ELO"/>
    <property type="match status" value="2"/>
</dbReference>
<dbReference type="PROSITE" id="PS01188">
    <property type="entry name" value="ELO"/>
    <property type="match status" value="1"/>
</dbReference>
<name>Y4669_DICDI</name>
<sequence length="251" mass="29410">METVQSIITEWTDPKSWEKLVQHSFKDSNWKELIDPVNYKFNFGVTPFSQFQIIPIVLVIYLVTIFSIKFLMKNRKPFSLKFISILHNAILCIWSLIMCVGVLYEIIKRVSNEGPLFTVCEDPNGGFDKGVTYYWSYIFYISKFYELLDTVIIVLKKKPLIFLHVYHHCKTVWWKKYITMIQILQFVCLGIAGVLHVYTINTIGCFTHYPAFAAAYSINFSFLFLFSKFFVKSYTPKNSNSNTNIKSKKID</sequence>
<organism>
    <name type="scientific">Dictyostelium discoideum</name>
    <name type="common">Social amoeba</name>
    <dbReference type="NCBI Taxonomy" id="44689"/>
    <lineage>
        <taxon>Eukaryota</taxon>
        <taxon>Amoebozoa</taxon>
        <taxon>Evosea</taxon>
        <taxon>Eumycetozoa</taxon>
        <taxon>Dictyostelia</taxon>
        <taxon>Dictyosteliales</taxon>
        <taxon>Dictyosteliaceae</taxon>
        <taxon>Dictyostelium</taxon>
    </lineage>
</organism>
<gene>
    <name type="ORF">DDB_G0274669</name>
</gene>
<feature type="chain" id="PRO_0000393467" description="Putative fatty acid elongase DDB_G0274669">
    <location>
        <begin position="1"/>
        <end position="251"/>
    </location>
</feature>
<feature type="transmembrane region" description="Helical" evidence="2">
    <location>
        <begin position="51"/>
        <end position="71"/>
    </location>
</feature>
<feature type="transmembrane region" description="Helical" evidence="2">
    <location>
        <begin position="82"/>
        <end position="102"/>
    </location>
</feature>
<feature type="transmembrane region" description="Helical" evidence="2">
    <location>
        <begin position="135"/>
        <end position="155"/>
    </location>
</feature>
<feature type="transmembrane region" description="Helical" evidence="2">
    <location>
        <begin position="177"/>
        <end position="197"/>
    </location>
</feature>
<feature type="transmembrane region" description="Helical" evidence="2">
    <location>
        <begin position="211"/>
        <end position="231"/>
    </location>
</feature>
<comment type="function">
    <text evidence="1">Could be implicated in synthesis of very long chain fatty acids.</text>
</comment>
<comment type="catalytic activity">
    <reaction>
        <text>a very-long-chain acyl-CoA + malonyl-CoA + H(+) = a very-long-chain 3-oxoacyl-CoA + CO2 + CoA</text>
        <dbReference type="Rhea" id="RHEA:32727"/>
        <dbReference type="ChEBI" id="CHEBI:15378"/>
        <dbReference type="ChEBI" id="CHEBI:16526"/>
        <dbReference type="ChEBI" id="CHEBI:57287"/>
        <dbReference type="ChEBI" id="CHEBI:57384"/>
        <dbReference type="ChEBI" id="CHEBI:90725"/>
        <dbReference type="ChEBI" id="CHEBI:90736"/>
        <dbReference type="EC" id="2.3.1.199"/>
    </reaction>
</comment>
<comment type="subcellular location">
    <subcellularLocation>
        <location evidence="3">Membrane</location>
        <topology evidence="3">Multi-pass membrane protein</topology>
    </subcellularLocation>
</comment>
<comment type="similarity">
    <text evidence="3">Belongs to the ELO family.</text>
</comment>
<accession>Q555E8</accession>